<gene>
    <name type="ordered locus">MJ0120</name>
</gene>
<accession>Q57584</accession>
<proteinExistence type="predicted"/>
<reference key="1">
    <citation type="journal article" date="1996" name="Science">
        <title>Complete genome sequence of the methanogenic archaeon, Methanococcus jannaschii.</title>
        <authorList>
            <person name="Bult C.J."/>
            <person name="White O."/>
            <person name="Olsen G.J."/>
            <person name="Zhou L."/>
            <person name="Fleischmann R.D."/>
            <person name="Sutton G.G."/>
            <person name="Blake J.A."/>
            <person name="FitzGerald L.M."/>
            <person name="Clayton R.A."/>
            <person name="Gocayne J.D."/>
            <person name="Kerlavage A.R."/>
            <person name="Dougherty B.A."/>
            <person name="Tomb J.-F."/>
            <person name="Adams M.D."/>
            <person name="Reich C.I."/>
            <person name="Overbeek R."/>
            <person name="Kirkness E.F."/>
            <person name="Weinstock K.G."/>
            <person name="Merrick J.M."/>
            <person name="Glodek A."/>
            <person name="Scott J.L."/>
            <person name="Geoghagen N.S.M."/>
            <person name="Weidman J.F."/>
            <person name="Fuhrmann J.L."/>
            <person name="Nguyen D."/>
            <person name="Utterback T.R."/>
            <person name="Kelley J.M."/>
            <person name="Peterson J.D."/>
            <person name="Sadow P.W."/>
            <person name="Hanna M.C."/>
            <person name="Cotton M.D."/>
            <person name="Roberts K.M."/>
            <person name="Hurst M.A."/>
            <person name="Kaine B.P."/>
            <person name="Borodovsky M."/>
            <person name="Klenk H.-P."/>
            <person name="Fraser C.M."/>
            <person name="Smith H.O."/>
            <person name="Woese C.R."/>
            <person name="Venter J.C."/>
        </authorList>
    </citation>
    <scope>NUCLEOTIDE SEQUENCE [LARGE SCALE GENOMIC DNA]</scope>
    <source>
        <strain>ATCC 43067 / DSM 2661 / JAL-1 / JCM 10045 / NBRC 100440</strain>
    </source>
</reference>
<feature type="chain" id="PRO_0000106702" description="Uncharacterized protein MJ0120">
    <location>
        <begin position="1"/>
        <end position="233"/>
    </location>
</feature>
<organism>
    <name type="scientific">Methanocaldococcus jannaschii (strain ATCC 43067 / DSM 2661 / JAL-1 / JCM 10045 / NBRC 100440)</name>
    <name type="common">Methanococcus jannaschii</name>
    <dbReference type="NCBI Taxonomy" id="243232"/>
    <lineage>
        <taxon>Archaea</taxon>
        <taxon>Methanobacteriati</taxon>
        <taxon>Methanobacteriota</taxon>
        <taxon>Methanomada group</taxon>
        <taxon>Methanococci</taxon>
        <taxon>Methanococcales</taxon>
        <taxon>Methanocaldococcaceae</taxon>
        <taxon>Methanocaldococcus</taxon>
    </lineage>
</organism>
<keyword id="KW-1185">Reference proteome</keyword>
<protein>
    <recommendedName>
        <fullName>Uncharacterized protein MJ0120</fullName>
    </recommendedName>
</protein>
<name>Y120_METJA</name>
<sequence>MKVAIVAGTPGAGKTSVLIHTIRTLINEGYKPVVVKIDCLYTDDDVRYKKLGIPVLVGLSKDMCPDHFAIYNFEEMVDWAKDKGDILLIETAGLCHRCAPYTKNSLGICVIDATSGPNTPRKVGPFLTSADIVVITKGDIISQAEREVFRERVLEMNPNCRIYEVNGLTGQGCVEIAKEIIESKDIKDLENEELRHNAPLCICTLCVGETRVSKKYHRGILRRIDGFMEYEGE</sequence>
<dbReference type="EMBL" id="L77117">
    <property type="protein sequence ID" value="AAB98101.1"/>
    <property type="molecule type" value="Genomic_DNA"/>
</dbReference>
<dbReference type="PIR" id="H64314">
    <property type="entry name" value="H64314"/>
</dbReference>
<dbReference type="RefSeq" id="WP_010869613.1">
    <property type="nucleotide sequence ID" value="NC_000909.1"/>
</dbReference>
<dbReference type="SMR" id="Q57584"/>
<dbReference type="FunCoup" id="Q57584">
    <property type="interactions" value="1"/>
</dbReference>
<dbReference type="STRING" id="243232.MJ_0120"/>
<dbReference type="PaxDb" id="243232-MJ_0120"/>
<dbReference type="EnsemblBacteria" id="AAB98101">
    <property type="protein sequence ID" value="AAB98101"/>
    <property type="gene ID" value="MJ_0120"/>
</dbReference>
<dbReference type="GeneID" id="1450963"/>
<dbReference type="KEGG" id="mja:MJ_0120"/>
<dbReference type="eggNOG" id="arCOG01231">
    <property type="taxonomic scope" value="Archaea"/>
</dbReference>
<dbReference type="HOGENOM" id="CLU_1193419_0_0_2"/>
<dbReference type="InParanoid" id="Q57584"/>
<dbReference type="OrthoDB" id="52948at2157"/>
<dbReference type="PhylomeDB" id="Q57584"/>
<dbReference type="Proteomes" id="UP000000805">
    <property type="component" value="Chromosome"/>
</dbReference>
<dbReference type="GO" id="GO:0003924">
    <property type="term" value="F:GTPase activity"/>
    <property type="evidence" value="ECO:0000318"/>
    <property type="project" value="GO_Central"/>
</dbReference>
<dbReference type="GO" id="GO:0016151">
    <property type="term" value="F:nickel cation binding"/>
    <property type="evidence" value="ECO:0000318"/>
    <property type="project" value="GO_Central"/>
</dbReference>
<dbReference type="GO" id="GO:0008270">
    <property type="term" value="F:zinc ion binding"/>
    <property type="evidence" value="ECO:0000318"/>
    <property type="project" value="GO_Central"/>
</dbReference>
<dbReference type="GO" id="GO:0051604">
    <property type="term" value="P:protein maturation"/>
    <property type="evidence" value="ECO:0000318"/>
    <property type="project" value="GO_Central"/>
</dbReference>
<dbReference type="Gene3D" id="3.40.50.300">
    <property type="entry name" value="P-loop containing nucleotide triphosphate hydrolases"/>
    <property type="match status" value="1"/>
</dbReference>
<dbReference type="InterPro" id="IPR003495">
    <property type="entry name" value="CobW/HypB/UreG_nucleotide-bd"/>
</dbReference>
<dbReference type="InterPro" id="IPR004392">
    <property type="entry name" value="Hyd_mat_HypB"/>
</dbReference>
<dbReference type="InterPro" id="IPR027417">
    <property type="entry name" value="P-loop_NTPase"/>
</dbReference>
<dbReference type="PANTHER" id="PTHR30134:SF1">
    <property type="entry name" value="COBW_HYPB_UREG NUCLEOTIDE-BINDING DOMAIN-CONTAINING PROTEIN"/>
    <property type="match status" value="1"/>
</dbReference>
<dbReference type="PANTHER" id="PTHR30134">
    <property type="entry name" value="HYDROGENASE PROTEIN ASSEMBLY PROTEIN, NICKEL CHAPERONE"/>
    <property type="match status" value="1"/>
</dbReference>
<dbReference type="Pfam" id="PF02492">
    <property type="entry name" value="cobW"/>
    <property type="match status" value="1"/>
</dbReference>
<dbReference type="PIRSF" id="PIRSF005624">
    <property type="entry name" value="Ni-bind_GTPase"/>
    <property type="match status" value="1"/>
</dbReference>
<dbReference type="SUPFAM" id="SSF52540">
    <property type="entry name" value="P-loop containing nucleoside triphosphate hydrolases"/>
    <property type="match status" value="1"/>
</dbReference>